<dbReference type="EMBL" id="CP000057">
    <property type="protein sequence ID" value="AAX87704.1"/>
    <property type="molecule type" value="Genomic_DNA"/>
</dbReference>
<dbReference type="RefSeq" id="WP_005661211.1">
    <property type="nucleotide sequence ID" value="NC_007146.2"/>
</dbReference>
<dbReference type="SMR" id="Q4QMP3"/>
<dbReference type="KEGG" id="hit:NTHI0795"/>
<dbReference type="HOGENOM" id="CLU_134863_5_2_6"/>
<dbReference type="Proteomes" id="UP000002525">
    <property type="component" value="Chromosome"/>
</dbReference>
<dbReference type="GO" id="GO:0032153">
    <property type="term" value="C:cell division site"/>
    <property type="evidence" value="ECO:0007669"/>
    <property type="project" value="UniProtKB-UniRule"/>
</dbReference>
<dbReference type="GO" id="GO:0030428">
    <property type="term" value="C:cell septum"/>
    <property type="evidence" value="ECO:0007669"/>
    <property type="project" value="TreeGrafter"/>
</dbReference>
<dbReference type="GO" id="GO:0005886">
    <property type="term" value="C:plasma membrane"/>
    <property type="evidence" value="ECO:0007669"/>
    <property type="project" value="UniProtKB-SubCell"/>
</dbReference>
<dbReference type="GO" id="GO:0043093">
    <property type="term" value="P:FtsZ-dependent cytokinesis"/>
    <property type="evidence" value="ECO:0007669"/>
    <property type="project" value="UniProtKB-UniRule"/>
</dbReference>
<dbReference type="HAMAP" id="MF_00599">
    <property type="entry name" value="FtsB"/>
    <property type="match status" value="1"/>
</dbReference>
<dbReference type="InterPro" id="IPR023081">
    <property type="entry name" value="Cell_div_FtsB"/>
</dbReference>
<dbReference type="InterPro" id="IPR007060">
    <property type="entry name" value="FtsL/DivIC"/>
</dbReference>
<dbReference type="NCBIfam" id="NF002058">
    <property type="entry name" value="PRK00888.1"/>
    <property type="match status" value="1"/>
</dbReference>
<dbReference type="PANTHER" id="PTHR37485">
    <property type="entry name" value="CELL DIVISION PROTEIN FTSB"/>
    <property type="match status" value="1"/>
</dbReference>
<dbReference type="PANTHER" id="PTHR37485:SF1">
    <property type="entry name" value="CELL DIVISION PROTEIN FTSB"/>
    <property type="match status" value="1"/>
</dbReference>
<dbReference type="Pfam" id="PF04977">
    <property type="entry name" value="DivIC"/>
    <property type="match status" value="1"/>
</dbReference>
<name>FTSB_HAEI8</name>
<accession>Q4QMP3</accession>
<comment type="function">
    <text evidence="1">Essential cell division protein. May link together the upstream cell division proteins, which are predominantly cytoplasmic, with the downstream cell division proteins, which are predominantly periplasmic.</text>
</comment>
<comment type="subunit">
    <text evidence="1">Part of a complex composed of FtsB, FtsL and FtsQ.</text>
</comment>
<comment type="subcellular location">
    <subcellularLocation>
        <location evidence="1">Cell inner membrane</location>
        <topology evidence="1">Single-pass type II membrane protein</topology>
    </subcellularLocation>
    <text evidence="1">Localizes to the division septum.</text>
</comment>
<comment type="similarity">
    <text evidence="1">Belongs to the FtsB family.</text>
</comment>
<feature type="chain" id="PRO_1000025701" description="Cell division protein FtsB">
    <location>
        <begin position="1"/>
        <end position="92"/>
    </location>
</feature>
<feature type="topological domain" description="Cytoplasmic" evidence="1">
    <location>
        <begin position="1"/>
        <end position="3"/>
    </location>
</feature>
<feature type="transmembrane region" description="Helical" evidence="1">
    <location>
        <begin position="4"/>
        <end position="21"/>
    </location>
</feature>
<feature type="topological domain" description="Periplasmic" evidence="1">
    <location>
        <begin position="22"/>
        <end position="92"/>
    </location>
</feature>
<feature type="coiled-coil region" evidence="1">
    <location>
        <begin position="28"/>
        <end position="63"/>
    </location>
</feature>
<proteinExistence type="inferred from homology"/>
<keyword id="KW-0131">Cell cycle</keyword>
<keyword id="KW-0132">Cell division</keyword>
<keyword id="KW-0997">Cell inner membrane</keyword>
<keyword id="KW-1003">Cell membrane</keyword>
<keyword id="KW-0175">Coiled coil</keyword>
<keyword id="KW-0472">Membrane</keyword>
<keyword id="KW-0812">Transmembrane</keyword>
<keyword id="KW-1133">Transmembrane helix</keyword>
<gene>
    <name evidence="1" type="primary">ftsB</name>
    <name type="ordered locus">NTHI0795</name>
</gene>
<evidence type="ECO:0000255" key="1">
    <source>
        <dbReference type="HAMAP-Rule" id="MF_00599"/>
    </source>
</evidence>
<organism>
    <name type="scientific">Haemophilus influenzae (strain 86-028NP)</name>
    <dbReference type="NCBI Taxonomy" id="281310"/>
    <lineage>
        <taxon>Bacteria</taxon>
        <taxon>Pseudomonadati</taxon>
        <taxon>Pseudomonadota</taxon>
        <taxon>Gammaproteobacteria</taxon>
        <taxon>Pasteurellales</taxon>
        <taxon>Pasteurellaceae</taxon>
        <taxon>Haemophilus</taxon>
    </lineage>
</organism>
<sequence length="92" mass="10916">MRLLILILLSVLVLFQYNFWFGSNGFLDYRQNAEKIKENQAENEKLSQRNQRINAEIQGLTKGFEAIEERARMQHGLVKENEVFYHIVKESK</sequence>
<reference key="1">
    <citation type="journal article" date="2005" name="J. Bacteriol.">
        <title>Genomic sequence of an otitis media isolate of nontypeable Haemophilus influenzae: comparative study with H. influenzae serotype d, strain KW20.</title>
        <authorList>
            <person name="Harrison A."/>
            <person name="Dyer D.W."/>
            <person name="Gillaspy A."/>
            <person name="Ray W.C."/>
            <person name="Mungur R."/>
            <person name="Carson M.B."/>
            <person name="Zhong H."/>
            <person name="Gipson J."/>
            <person name="Gipson M."/>
            <person name="Johnson L.S."/>
            <person name="Lewis L."/>
            <person name="Bakaletz L.O."/>
            <person name="Munson R.S. Jr."/>
        </authorList>
    </citation>
    <scope>NUCLEOTIDE SEQUENCE [LARGE SCALE GENOMIC DNA]</scope>
    <source>
        <strain>86-028NP</strain>
    </source>
</reference>
<protein>
    <recommendedName>
        <fullName evidence="1">Cell division protein FtsB</fullName>
    </recommendedName>
</protein>